<accession>B3LGK5</accession>
<evidence type="ECO:0000250" key="1"/>
<evidence type="ECO:0000305" key="2"/>
<feature type="chain" id="PRO_0000402251" description="Required for respiratory growth protein 1, mitochondrial">
    <location>
        <begin position="1"/>
        <end position="365"/>
    </location>
</feature>
<reference key="1">
    <citation type="submission" date="2005-03" db="EMBL/GenBank/DDBJ databases">
        <title>Annotation of the Saccharomyces cerevisiae RM11-1a genome.</title>
        <authorList>
            <consortium name="The Broad Institute Genome Sequencing Platform"/>
            <person name="Birren B.W."/>
            <person name="Lander E.S."/>
            <person name="Galagan J.E."/>
            <person name="Nusbaum C."/>
            <person name="Devon K."/>
            <person name="Cuomo C."/>
            <person name="Jaffe D.B."/>
            <person name="Butler J."/>
            <person name="Alvarez P."/>
            <person name="Gnerre S."/>
            <person name="Grabherr M."/>
            <person name="Kleber M."/>
            <person name="Mauceli E.W."/>
            <person name="Brockman W."/>
            <person name="MacCallum I.A."/>
            <person name="Rounsley S."/>
            <person name="Young S.K."/>
            <person name="LaButti K."/>
            <person name="Pushparaj V."/>
            <person name="DeCaprio D."/>
            <person name="Crawford M."/>
            <person name="Koehrsen M."/>
            <person name="Engels R."/>
            <person name="Montgomery P."/>
            <person name="Pearson M."/>
            <person name="Howarth C."/>
            <person name="Larson L."/>
            <person name="Luoma S."/>
            <person name="White J."/>
            <person name="O'Leary S."/>
            <person name="Kodira C.D."/>
            <person name="Zeng Q."/>
            <person name="Yandava C."/>
            <person name="Alvarado L."/>
            <person name="Pratt S."/>
            <person name="Kruglyak L."/>
        </authorList>
    </citation>
    <scope>NUCLEOTIDE SEQUENCE [LARGE SCALE GENOMIC DNA]</scope>
    <source>
        <strain>RM11-1a</strain>
    </source>
</reference>
<comment type="function">
    <text evidence="1">Essential for respiratory growth and required for mitochondrial protein synthesis. Required for vacuolar acidification (By similarity).</text>
</comment>
<comment type="subcellular location">
    <subcellularLocation>
        <location evidence="1">Mitochondrion</location>
    </subcellularLocation>
</comment>
<comment type="PTM">
    <text evidence="1">N-glycosylated. Glycosylation is important for correct localization of the protein (By similarity).</text>
</comment>
<comment type="similarity">
    <text evidence="2">Belongs to the RRG1 family.</text>
</comment>
<gene>
    <name type="primary">RRG1</name>
    <name type="ORF">SCRG_00450</name>
</gene>
<protein>
    <recommendedName>
        <fullName>Required for respiratory growth protein 1, mitochondrial</fullName>
    </recommendedName>
</protein>
<dbReference type="EMBL" id="CH408043">
    <property type="protein sequence ID" value="EDV08234.1"/>
    <property type="molecule type" value="Genomic_DNA"/>
</dbReference>
<dbReference type="SMR" id="B3LGK5"/>
<dbReference type="HOGENOM" id="CLU_062256_0_0_1"/>
<dbReference type="OrthoDB" id="37683at4893"/>
<dbReference type="Proteomes" id="UP000008335">
    <property type="component" value="Unassembled WGS sequence"/>
</dbReference>
<dbReference type="GO" id="GO:0005739">
    <property type="term" value="C:mitochondrion"/>
    <property type="evidence" value="ECO:0007669"/>
    <property type="project" value="UniProtKB-SubCell"/>
</dbReference>
<organism>
    <name type="scientific">Saccharomyces cerevisiae (strain RM11-1a)</name>
    <name type="common">Baker's yeast</name>
    <dbReference type="NCBI Taxonomy" id="285006"/>
    <lineage>
        <taxon>Eukaryota</taxon>
        <taxon>Fungi</taxon>
        <taxon>Dikarya</taxon>
        <taxon>Ascomycota</taxon>
        <taxon>Saccharomycotina</taxon>
        <taxon>Saccharomycetes</taxon>
        <taxon>Saccharomycetales</taxon>
        <taxon>Saccharomycetaceae</taxon>
        <taxon>Saccharomyces</taxon>
    </lineage>
</organism>
<name>RRG1_YEAS1</name>
<sequence>MAQNFGKIPSHKSYVLSLYRTVLRNIPKCCHSYAFQYEIKKTLSKQLFKHKHDKSSWSVYTLLNEFSLLNNCLLEGKLQEIKNLMKPLKKMKKQLETTKILNSLTSLGDVKTNDPEEVRRFHVLSAYIKRKQDLGLLPAYIPKTYQHKLLLPLALNEHACLKLFHIQQKLKNGPPSAGLSYTKEGRNQIWFVRSPINKGRQQSKKLGILIRKERKDSQKNIDNLNFCEINAAWALHEAIWEEYLESKKIIKVNLPKYLEYAANIPKSTKCNPSSQYQKIKEWVDPVREIMFELHSKSFQRVEYFNKYKEKLLKNGGQLAYFDKKSKEMYAKRLTLFRKMSKETLPYVTLFIEGRDLPSVLAKYGF</sequence>
<proteinExistence type="inferred from homology"/>
<keyword id="KW-0325">Glycoprotein</keyword>
<keyword id="KW-0496">Mitochondrion</keyword>